<sequence>MGRRPARCYRYCKNKPYPKSRFCRGVPDAKIRIFDLGRKKAKVDEFPLCGHMVSDEYEQLSSEALEAARICANKYMVKSCGKDGFHIRVRLHPFHVIRINKMLSCAGADRLQTGMRGAFGKPQGTVARVHIGQVIMSIRTKLQNKEHVIEALRRAKFKFPGRQKIHISKKWGFTKFNADEFEDMVAEKRLIPDGCGVKYIPNRGPLDKWRALHS</sequence>
<protein>
    <recommendedName>
        <fullName evidence="5">Large ribosomal subunit protein uL16</fullName>
    </recommendedName>
    <alternativeName>
        <fullName evidence="5">60S ribosomal protein L10</fullName>
    </alternativeName>
    <alternativeName>
        <fullName>Protein QM homolog</fullName>
    </alternativeName>
    <alternativeName>
        <fullName evidence="6">Ribosomal protein L10</fullName>
    </alternativeName>
</protein>
<comment type="function">
    <text evidence="1 4">Component of the large ribosomal subunit. Plays a role in the formation of actively translating ribosomes (PubMed:36517592). May play a role in the embryonic brain development (By similarity).</text>
</comment>
<comment type="subunit">
    <text evidence="4">Component of the large ribosomal subunit (PubMed:36517592). Mature ribosomes consist of a small (40S) and a large (60S) subunit (PubMed:36517592). The 40S subunit contains about 33 different proteins and 1 molecule of RNA (18S) (PubMed:36517592). The 60S subunit contains about 49 different proteins and 3 molecules of RNA (28S, 5.8S and 5S) (PubMed:36517592).</text>
</comment>
<comment type="subcellular location">
    <subcellularLocation>
        <location evidence="4">Cytoplasm</location>
    </subcellularLocation>
</comment>
<comment type="PTM">
    <text evidence="2">Citrullinated by PADI4.</text>
</comment>
<comment type="PTM">
    <text evidence="3">Ufmylated by UFL1.</text>
</comment>
<comment type="similarity">
    <text evidence="5">Belongs to the universal ribosomal protein uL16 family.</text>
</comment>
<name>RL10_MOUSE</name>
<keyword id="KW-0002">3D-structure</keyword>
<keyword id="KW-0164">Citrullination</keyword>
<keyword id="KW-0963">Cytoplasm</keyword>
<keyword id="KW-0217">Developmental protein</keyword>
<keyword id="KW-1017">Isopeptide bond</keyword>
<keyword id="KW-1185">Reference proteome</keyword>
<keyword id="KW-0687">Ribonucleoprotein</keyword>
<keyword id="KW-0689">Ribosomal protein</keyword>
<keyword id="KW-0832">Ubl conjugation</keyword>
<accession>Q6ZWV3</accession>
<accession>P45634</accession>
<accession>Q569M8</accession>
<accession>Q5M9K8</accession>
<proteinExistence type="evidence at protein level"/>
<feature type="chain" id="PRO_0000147107" description="Large ribosomal subunit protein uL16">
    <location>
        <begin position="1"/>
        <end position="214"/>
    </location>
</feature>
<feature type="modified residue" description="Citrulline" evidence="2">
    <location>
        <position position="32"/>
    </location>
</feature>
<feature type="cross-link" description="Glycyl lysine isopeptide (Lys-Gly) (interchain with G-Cter in SUMO2)" evidence="1">
    <location>
        <position position="175"/>
    </location>
</feature>
<feature type="cross-link" description="Glycyl lysine isopeptide (Lys-Gly) (interchain with G-Cter in ubiquitin)" evidence="1">
    <location>
        <position position="188"/>
    </location>
</feature>
<feature type="sequence conflict" description="In Ref. 5; AAH86917." evidence="5" ref="5">
    <original>E</original>
    <variation>G</variation>
    <location>
        <position position="150"/>
    </location>
</feature>
<gene>
    <name evidence="6" type="primary">Rpl10</name>
    <name type="synonym">Qm</name>
</gene>
<evidence type="ECO:0000250" key="1">
    <source>
        <dbReference type="UniProtKB" id="P27635"/>
    </source>
</evidence>
<evidence type="ECO:0000269" key="2">
    <source>
    </source>
</evidence>
<evidence type="ECO:0000269" key="3">
    <source>
    </source>
</evidence>
<evidence type="ECO:0000269" key="4">
    <source>
    </source>
</evidence>
<evidence type="ECO:0000305" key="5"/>
<evidence type="ECO:0000312" key="6">
    <source>
        <dbReference type="MGI" id="MGI:105943"/>
    </source>
</evidence>
<evidence type="ECO:0007744" key="7">
    <source>
        <dbReference type="PDB" id="7CPU"/>
    </source>
</evidence>
<reference key="1">
    <citation type="journal article" date="1993" name="Biochem. Biophys. Res. Commun.">
        <title>A novel mouse gene highly conserved throughout evolution: regulation in adipocyte differentiation and in tumorigenic cell lines.</title>
        <authorList>
            <person name="Eisinger D.P."/>
            <person name="Jiang H.P."/>
            <person name="Serrero G."/>
        </authorList>
    </citation>
    <scope>NUCLEOTIDE SEQUENCE [MRNA]</scope>
    <source>
        <tissue>Adipocyte</tissue>
    </source>
</reference>
<reference key="2">
    <citation type="submission" date="1993-09" db="EMBL/GenBank/DDBJ databases">
        <authorList>
            <person name="Raj N.B.K."/>
            <person name="Su Y."/>
            <person name="Au W.C."/>
            <person name="Pitha P.M."/>
        </authorList>
    </citation>
    <scope>NUCLEOTIDE SEQUENCE [MRNA]</scope>
    <source>
        <strain>C57BL/6J</strain>
        <tissue>Spleen</tissue>
    </source>
</reference>
<reference key="3">
    <citation type="journal article" date="2005" name="Science">
        <title>The transcriptional landscape of the mammalian genome.</title>
        <authorList>
            <person name="Carninci P."/>
            <person name="Kasukawa T."/>
            <person name="Katayama S."/>
            <person name="Gough J."/>
            <person name="Frith M.C."/>
            <person name="Maeda N."/>
            <person name="Oyama R."/>
            <person name="Ravasi T."/>
            <person name="Lenhard B."/>
            <person name="Wells C."/>
            <person name="Kodzius R."/>
            <person name="Shimokawa K."/>
            <person name="Bajic V.B."/>
            <person name="Brenner S.E."/>
            <person name="Batalov S."/>
            <person name="Forrest A.R."/>
            <person name="Zavolan M."/>
            <person name="Davis M.J."/>
            <person name="Wilming L.G."/>
            <person name="Aidinis V."/>
            <person name="Allen J.E."/>
            <person name="Ambesi-Impiombato A."/>
            <person name="Apweiler R."/>
            <person name="Aturaliya R.N."/>
            <person name="Bailey T.L."/>
            <person name="Bansal M."/>
            <person name="Baxter L."/>
            <person name="Beisel K.W."/>
            <person name="Bersano T."/>
            <person name="Bono H."/>
            <person name="Chalk A.M."/>
            <person name="Chiu K.P."/>
            <person name="Choudhary V."/>
            <person name="Christoffels A."/>
            <person name="Clutterbuck D.R."/>
            <person name="Crowe M.L."/>
            <person name="Dalla E."/>
            <person name="Dalrymple B.P."/>
            <person name="de Bono B."/>
            <person name="Della Gatta G."/>
            <person name="di Bernardo D."/>
            <person name="Down T."/>
            <person name="Engstrom P."/>
            <person name="Fagiolini M."/>
            <person name="Faulkner G."/>
            <person name="Fletcher C.F."/>
            <person name="Fukushima T."/>
            <person name="Furuno M."/>
            <person name="Futaki S."/>
            <person name="Gariboldi M."/>
            <person name="Georgii-Hemming P."/>
            <person name="Gingeras T.R."/>
            <person name="Gojobori T."/>
            <person name="Green R.E."/>
            <person name="Gustincich S."/>
            <person name="Harbers M."/>
            <person name="Hayashi Y."/>
            <person name="Hensch T.K."/>
            <person name="Hirokawa N."/>
            <person name="Hill D."/>
            <person name="Huminiecki L."/>
            <person name="Iacono M."/>
            <person name="Ikeo K."/>
            <person name="Iwama A."/>
            <person name="Ishikawa T."/>
            <person name="Jakt M."/>
            <person name="Kanapin A."/>
            <person name="Katoh M."/>
            <person name="Kawasawa Y."/>
            <person name="Kelso J."/>
            <person name="Kitamura H."/>
            <person name="Kitano H."/>
            <person name="Kollias G."/>
            <person name="Krishnan S.P."/>
            <person name="Kruger A."/>
            <person name="Kummerfeld S.K."/>
            <person name="Kurochkin I.V."/>
            <person name="Lareau L.F."/>
            <person name="Lazarevic D."/>
            <person name="Lipovich L."/>
            <person name="Liu J."/>
            <person name="Liuni S."/>
            <person name="McWilliam S."/>
            <person name="Madan Babu M."/>
            <person name="Madera M."/>
            <person name="Marchionni L."/>
            <person name="Matsuda H."/>
            <person name="Matsuzawa S."/>
            <person name="Miki H."/>
            <person name="Mignone F."/>
            <person name="Miyake S."/>
            <person name="Morris K."/>
            <person name="Mottagui-Tabar S."/>
            <person name="Mulder N."/>
            <person name="Nakano N."/>
            <person name="Nakauchi H."/>
            <person name="Ng P."/>
            <person name="Nilsson R."/>
            <person name="Nishiguchi S."/>
            <person name="Nishikawa S."/>
            <person name="Nori F."/>
            <person name="Ohara O."/>
            <person name="Okazaki Y."/>
            <person name="Orlando V."/>
            <person name="Pang K.C."/>
            <person name="Pavan W.J."/>
            <person name="Pavesi G."/>
            <person name="Pesole G."/>
            <person name="Petrovsky N."/>
            <person name="Piazza S."/>
            <person name="Reed J."/>
            <person name="Reid J.F."/>
            <person name="Ring B.Z."/>
            <person name="Ringwald M."/>
            <person name="Rost B."/>
            <person name="Ruan Y."/>
            <person name="Salzberg S.L."/>
            <person name="Sandelin A."/>
            <person name="Schneider C."/>
            <person name="Schoenbach C."/>
            <person name="Sekiguchi K."/>
            <person name="Semple C.A."/>
            <person name="Seno S."/>
            <person name="Sessa L."/>
            <person name="Sheng Y."/>
            <person name="Shibata Y."/>
            <person name="Shimada H."/>
            <person name="Shimada K."/>
            <person name="Silva D."/>
            <person name="Sinclair B."/>
            <person name="Sperling S."/>
            <person name="Stupka E."/>
            <person name="Sugiura K."/>
            <person name="Sultana R."/>
            <person name="Takenaka Y."/>
            <person name="Taki K."/>
            <person name="Tammoja K."/>
            <person name="Tan S.L."/>
            <person name="Tang S."/>
            <person name="Taylor M.S."/>
            <person name="Tegner J."/>
            <person name="Teichmann S.A."/>
            <person name="Ueda H.R."/>
            <person name="van Nimwegen E."/>
            <person name="Verardo R."/>
            <person name="Wei C.L."/>
            <person name="Yagi K."/>
            <person name="Yamanishi H."/>
            <person name="Zabarovsky E."/>
            <person name="Zhu S."/>
            <person name="Zimmer A."/>
            <person name="Hide W."/>
            <person name="Bult C."/>
            <person name="Grimmond S.M."/>
            <person name="Teasdale R.D."/>
            <person name="Liu E.T."/>
            <person name="Brusic V."/>
            <person name="Quackenbush J."/>
            <person name="Wahlestedt C."/>
            <person name="Mattick J.S."/>
            <person name="Hume D.A."/>
            <person name="Kai C."/>
            <person name="Sasaki D."/>
            <person name="Tomaru Y."/>
            <person name="Fukuda S."/>
            <person name="Kanamori-Katayama M."/>
            <person name="Suzuki M."/>
            <person name="Aoki J."/>
            <person name="Arakawa T."/>
            <person name="Iida J."/>
            <person name="Imamura K."/>
            <person name="Itoh M."/>
            <person name="Kato T."/>
            <person name="Kawaji H."/>
            <person name="Kawagashira N."/>
            <person name="Kawashima T."/>
            <person name="Kojima M."/>
            <person name="Kondo S."/>
            <person name="Konno H."/>
            <person name="Nakano K."/>
            <person name="Ninomiya N."/>
            <person name="Nishio T."/>
            <person name="Okada M."/>
            <person name="Plessy C."/>
            <person name="Shibata K."/>
            <person name="Shiraki T."/>
            <person name="Suzuki S."/>
            <person name="Tagami M."/>
            <person name="Waki K."/>
            <person name="Watahiki A."/>
            <person name="Okamura-Oho Y."/>
            <person name="Suzuki H."/>
            <person name="Kawai J."/>
            <person name="Hayashizaki Y."/>
        </authorList>
    </citation>
    <scope>NUCLEOTIDE SEQUENCE [LARGE SCALE MRNA]</scope>
    <source>
        <strain>C57BL/6J</strain>
        <strain>DBA/2J</strain>
        <strain>NOD</strain>
        <tissue>Blastula</tissue>
        <tissue>Bone marrow macrophage</tissue>
        <tissue>Embryo</tissue>
        <tissue>Embryonic head</tissue>
        <tissue>Embryonic heart</tissue>
        <tissue>Embryonic liver</tissue>
        <tissue>Lung</tissue>
        <tissue>Morula</tissue>
        <tissue>Thymus</tissue>
    </source>
</reference>
<reference key="4">
    <citation type="submission" date="2005-07" db="EMBL/GenBank/DDBJ databases">
        <authorList>
            <person name="Mural R.J."/>
            <person name="Adams M.D."/>
            <person name="Myers E.W."/>
            <person name="Smith H.O."/>
            <person name="Venter J.C."/>
        </authorList>
    </citation>
    <scope>NUCLEOTIDE SEQUENCE [LARGE SCALE GENOMIC DNA]</scope>
</reference>
<reference key="5">
    <citation type="journal article" date="2004" name="Genome Res.">
        <title>The status, quality, and expansion of the NIH full-length cDNA project: the Mammalian Gene Collection (MGC).</title>
        <authorList>
            <consortium name="The MGC Project Team"/>
        </authorList>
    </citation>
    <scope>NUCLEOTIDE SEQUENCE [LARGE SCALE MRNA]</scope>
    <source>
        <strain>C57BL/6J</strain>
        <strain>FVB/N</strain>
        <strain>FVB/N-3</strain>
        <tissue>Brain</tissue>
        <tissue>Colon</tissue>
        <tissue>Liver</tissue>
        <tissue>Mammary tumor</tissue>
        <tissue>Thyroid</tissue>
    </source>
</reference>
<reference key="6">
    <citation type="journal article" date="2010" name="Cell">
        <title>A tissue-specific atlas of mouse protein phosphorylation and expression.</title>
        <authorList>
            <person name="Huttlin E.L."/>
            <person name="Jedrychowski M.P."/>
            <person name="Elias J.E."/>
            <person name="Goswami T."/>
            <person name="Rad R."/>
            <person name="Beausoleil S.A."/>
            <person name="Villen J."/>
            <person name="Haas W."/>
            <person name="Sowa M.E."/>
            <person name="Gygi S.P."/>
        </authorList>
    </citation>
    <scope>IDENTIFICATION BY MASS SPECTROMETRY [LARGE SCALE ANALYSIS]</scope>
    <source>
        <tissue>Brain</tissue>
        <tissue>Brown adipose tissue</tissue>
        <tissue>Heart</tissue>
        <tissue>Kidney</tissue>
        <tissue>Liver</tissue>
        <tissue>Lung</tissue>
        <tissue>Pancreas</tissue>
        <tissue>Spleen</tissue>
    </source>
</reference>
<reference key="7">
    <citation type="journal article" date="2014" name="Nature">
        <title>Citrullination regulates pluripotency and histone H1 binding to chromatin.</title>
        <authorList>
            <person name="Christophorou M.A."/>
            <person name="Castelo-Branco G."/>
            <person name="Halley-Stott R.P."/>
            <person name="Oliveira C.S."/>
            <person name="Loos R."/>
            <person name="Radzisheuskaya A."/>
            <person name="Mowen K.A."/>
            <person name="Bertone P."/>
            <person name="Silva J.C."/>
            <person name="Zernicka-Goetz M."/>
            <person name="Nielsen M.L."/>
            <person name="Gurdon J.B."/>
            <person name="Kouzarides T."/>
        </authorList>
    </citation>
    <scope>CITRULLINATION AT ARG-32</scope>
</reference>
<reference key="8">
    <citation type="journal article" date="2017" name="Cell">
        <title>The mammalian ribo-interactome reveals ribosome functional diversity and heterogeneity.</title>
        <authorList>
            <person name="Simsek D."/>
            <person name="Tiu G.C."/>
            <person name="Flynn R.A."/>
            <person name="Byeon G.W."/>
            <person name="Leppek K."/>
            <person name="Xu A.F."/>
            <person name="Chang H.Y."/>
            <person name="Barna M."/>
        </authorList>
    </citation>
    <scope>UFMYLATION</scope>
</reference>
<reference evidence="7" key="9">
    <citation type="journal article" date="2022" name="Nature">
        <title>A male germ-cell-specific ribosome controls male fertility.</title>
        <authorList>
            <person name="Li H."/>
            <person name="Huo Y."/>
            <person name="He X."/>
            <person name="Yao L."/>
            <person name="Zhang H."/>
            <person name="Cui Y."/>
            <person name="Xiao H."/>
            <person name="Xie W."/>
            <person name="Zhang D."/>
            <person name="Wang Y."/>
            <person name="Zhang S."/>
            <person name="Tu H."/>
            <person name="Cheng Y."/>
            <person name="Guo Y."/>
            <person name="Cao X."/>
            <person name="Zhu Y."/>
            <person name="Jiang T."/>
            <person name="Guo X."/>
            <person name="Qin Y."/>
            <person name="Sha J."/>
        </authorList>
    </citation>
    <scope>STRUCTURE BY ELECTRON MICROSCOPY (3.03 ANGSTROMS) OF RIBOSOME</scope>
    <scope>FUNCTION</scope>
    <scope>SUBUNIT</scope>
    <scope>SUBCELLULAR LOCATION</scope>
</reference>
<dbReference type="EMBL" id="M93980">
    <property type="protein sequence ID" value="AAA16894.1"/>
    <property type="molecule type" value="mRNA"/>
</dbReference>
<dbReference type="EMBL" id="X75312">
    <property type="protein sequence ID" value="CAA53061.1"/>
    <property type="molecule type" value="mRNA"/>
</dbReference>
<dbReference type="EMBL" id="AK011022">
    <property type="protein sequence ID" value="BAB27339.1"/>
    <property type="molecule type" value="mRNA"/>
</dbReference>
<dbReference type="EMBL" id="AK012561">
    <property type="protein sequence ID" value="BAB28316.1"/>
    <property type="molecule type" value="mRNA"/>
</dbReference>
<dbReference type="EMBL" id="AK014054">
    <property type="protein sequence ID" value="BAB29134.1"/>
    <property type="molecule type" value="mRNA"/>
</dbReference>
<dbReference type="EMBL" id="AK088777">
    <property type="protein sequence ID" value="BAC40566.1"/>
    <property type="molecule type" value="mRNA"/>
</dbReference>
<dbReference type="EMBL" id="AK144831">
    <property type="protein sequence ID" value="BAE26087.1"/>
    <property type="molecule type" value="mRNA"/>
</dbReference>
<dbReference type="EMBL" id="AK146217">
    <property type="protein sequence ID" value="BAE26985.1"/>
    <property type="molecule type" value="mRNA"/>
</dbReference>
<dbReference type="EMBL" id="AK151416">
    <property type="protein sequence ID" value="BAE30381.1"/>
    <property type="molecule type" value="mRNA"/>
</dbReference>
<dbReference type="EMBL" id="AK151655">
    <property type="protein sequence ID" value="BAE30584.1"/>
    <property type="molecule type" value="mRNA"/>
</dbReference>
<dbReference type="EMBL" id="AK151736">
    <property type="protein sequence ID" value="BAE30650.1"/>
    <property type="molecule type" value="mRNA"/>
</dbReference>
<dbReference type="EMBL" id="AK152123">
    <property type="protein sequence ID" value="BAE30965.1"/>
    <property type="molecule type" value="mRNA"/>
</dbReference>
<dbReference type="EMBL" id="AK152854">
    <property type="protein sequence ID" value="BAE31547.1"/>
    <property type="molecule type" value="mRNA"/>
</dbReference>
<dbReference type="EMBL" id="AK153345">
    <property type="protein sequence ID" value="BAE31921.1"/>
    <property type="molecule type" value="mRNA"/>
</dbReference>
<dbReference type="EMBL" id="AK160618">
    <property type="protein sequence ID" value="BAE35918.1"/>
    <property type="molecule type" value="mRNA"/>
</dbReference>
<dbReference type="EMBL" id="AK166610">
    <property type="protein sequence ID" value="BAE38892.1"/>
    <property type="molecule type" value="mRNA"/>
</dbReference>
<dbReference type="EMBL" id="AK167239">
    <property type="protein sequence ID" value="BAE39361.1"/>
    <property type="molecule type" value="mRNA"/>
</dbReference>
<dbReference type="EMBL" id="AK167966">
    <property type="protein sequence ID" value="BAE39963.1"/>
    <property type="molecule type" value="mRNA"/>
</dbReference>
<dbReference type="EMBL" id="AK168854">
    <property type="protein sequence ID" value="BAE40675.1"/>
    <property type="molecule type" value="mRNA"/>
</dbReference>
<dbReference type="EMBL" id="CH466519">
    <property type="protein sequence ID" value="EDL27744.1"/>
    <property type="molecule type" value="Genomic_DNA"/>
</dbReference>
<dbReference type="EMBL" id="CH466650">
    <property type="protein sequence ID" value="EDL29836.1"/>
    <property type="molecule type" value="Genomic_DNA"/>
</dbReference>
<dbReference type="EMBL" id="BC024901">
    <property type="protein sequence ID" value="AAH24901.1"/>
    <property type="molecule type" value="mRNA"/>
</dbReference>
<dbReference type="EMBL" id="BC048872">
    <property type="protein sequence ID" value="AAH48872.1"/>
    <property type="molecule type" value="mRNA"/>
</dbReference>
<dbReference type="EMBL" id="BC082293">
    <property type="protein sequence ID" value="AAH82293.1"/>
    <property type="molecule type" value="mRNA"/>
</dbReference>
<dbReference type="EMBL" id="BC083327">
    <property type="protein sequence ID" value="AAH83327.1"/>
    <property type="molecule type" value="mRNA"/>
</dbReference>
<dbReference type="EMBL" id="BC086917">
    <property type="protein sequence ID" value="AAH86917.1"/>
    <property type="molecule type" value="mRNA"/>
</dbReference>
<dbReference type="EMBL" id="BC092383">
    <property type="protein sequence ID" value="AAH92383.1"/>
    <property type="molecule type" value="mRNA"/>
</dbReference>
<dbReference type="EMBL" id="BC098204">
    <property type="protein sequence ID" value="AAH98204.1"/>
    <property type="molecule type" value="mRNA"/>
</dbReference>
<dbReference type="EMBL" id="BC099437">
    <property type="protein sequence ID" value="AAH99437.1"/>
    <property type="molecule type" value="mRNA"/>
</dbReference>
<dbReference type="CCDS" id="CCDS41019.1"/>
<dbReference type="PIR" id="JC2013">
    <property type="entry name" value="JC2013"/>
</dbReference>
<dbReference type="RefSeq" id="NP_443067.1">
    <property type="nucleotide sequence ID" value="NM_052835.4"/>
</dbReference>
<dbReference type="PDB" id="6SWA">
    <property type="method" value="EM"/>
    <property type="resolution" value="3.10 A"/>
    <property type="chains" value="I=1-214"/>
</dbReference>
<dbReference type="PDB" id="7CPU">
    <property type="method" value="EM"/>
    <property type="resolution" value="2.82 A"/>
    <property type="chains" value="LI=1-214"/>
</dbReference>
<dbReference type="PDBsum" id="6SWA"/>
<dbReference type="PDBsum" id="7CPU"/>
<dbReference type="EMDB" id="EMD-10321"/>
<dbReference type="EMDB" id="EMD-30432"/>
<dbReference type="SMR" id="Q6ZWV3"/>
<dbReference type="BioGRID" id="226050">
    <property type="interactions" value="50"/>
</dbReference>
<dbReference type="ComplexPortal" id="CPX-5262">
    <property type="entry name" value="60S cytosolic large ribosomal subunit"/>
</dbReference>
<dbReference type="ComplexPortal" id="CPX-7663">
    <property type="entry name" value="60S cytosolic large ribosomal subunit, striated muscle variant"/>
</dbReference>
<dbReference type="FunCoup" id="Q6ZWV3">
    <property type="interactions" value="1905"/>
</dbReference>
<dbReference type="IntAct" id="Q6ZWV3">
    <property type="interactions" value="3"/>
</dbReference>
<dbReference type="MINT" id="Q6ZWV3"/>
<dbReference type="STRING" id="10090.ENSMUSP00000082055"/>
<dbReference type="GlyGen" id="Q6ZWV3">
    <property type="glycosylation" value="1 site, 1 O-linked glycan (1 site)"/>
</dbReference>
<dbReference type="iPTMnet" id="Q6ZWV3"/>
<dbReference type="MetOSite" id="Q6ZWV3"/>
<dbReference type="PhosphoSitePlus" id="Q6ZWV3"/>
<dbReference type="SwissPalm" id="Q6ZWV3"/>
<dbReference type="jPOST" id="Q6ZWV3"/>
<dbReference type="PaxDb" id="10090-ENSMUSP00000008826"/>
<dbReference type="PeptideAtlas" id="Q6ZWV3"/>
<dbReference type="ProteomicsDB" id="253296"/>
<dbReference type="Pumba" id="Q6ZWV3"/>
<dbReference type="TopDownProteomics" id="Q6ZWV3"/>
<dbReference type="DNASU" id="110954"/>
<dbReference type="Ensembl" id="ENSMUST00000008826.14">
    <property type="protein sequence ID" value="ENSMUSP00000008826.8"/>
    <property type="gene ID" value="ENSMUSG00000008682.14"/>
</dbReference>
<dbReference type="Ensembl" id="ENSMUST00000074085.12">
    <property type="protein sequence ID" value="ENSMUSP00000082055.5"/>
    <property type="gene ID" value="ENSMUSG00000008682.14"/>
</dbReference>
<dbReference type="Ensembl" id="ENSMUST00000076364.6">
    <property type="protein sequence ID" value="ENSMUSP00000125806.3"/>
    <property type="gene ID" value="ENSMUSG00000058443.6"/>
</dbReference>
<dbReference type="GeneID" id="110954"/>
<dbReference type="KEGG" id="mmu:110954"/>
<dbReference type="UCSC" id="uc009toc.2">
    <property type="organism name" value="mouse"/>
</dbReference>
<dbReference type="AGR" id="MGI:105943"/>
<dbReference type="CTD" id="6134"/>
<dbReference type="MGI" id="MGI:105943">
    <property type="gene designation" value="Rpl10"/>
</dbReference>
<dbReference type="VEuPathDB" id="HostDB:ENSMUSG00000008682"/>
<dbReference type="VEuPathDB" id="HostDB:ENSMUSG00000058443"/>
<dbReference type="eggNOG" id="KOG0857">
    <property type="taxonomic scope" value="Eukaryota"/>
</dbReference>
<dbReference type="GeneTree" id="ENSGT00390000003897"/>
<dbReference type="HOGENOM" id="CLU_084051_0_0_1"/>
<dbReference type="InParanoid" id="Q6ZWV3"/>
<dbReference type="OMA" id="CICASKY"/>
<dbReference type="OrthoDB" id="9543396at2759"/>
<dbReference type="PhylomeDB" id="Q6ZWV3"/>
<dbReference type="TreeFam" id="TF300082"/>
<dbReference type="Reactome" id="R-MMU-156827">
    <property type="pathway name" value="L13a-mediated translational silencing of Ceruloplasmin expression"/>
</dbReference>
<dbReference type="Reactome" id="R-MMU-1799339">
    <property type="pathway name" value="SRP-dependent cotranslational protein targeting to membrane"/>
</dbReference>
<dbReference type="Reactome" id="R-MMU-6791226">
    <property type="pathway name" value="Major pathway of rRNA processing in the nucleolus and cytosol"/>
</dbReference>
<dbReference type="Reactome" id="R-MMU-72689">
    <property type="pathway name" value="Formation of a pool of free 40S subunits"/>
</dbReference>
<dbReference type="Reactome" id="R-MMU-72706">
    <property type="pathway name" value="GTP hydrolysis and joining of the 60S ribosomal subunit"/>
</dbReference>
<dbReference type="Reactome" id="R-MMU-975956">
    <property type="pathway name" value="Nonsense Mediated Decay (NMD) independent of the Exon Junction Complex (EJC)"/>
</dbReference>
<dbReference type="Reactome" id="R-MMU-975957">
    <property type="pathway name" value="Nonsense Mediated Decay (NMD) enhanced by the Exon Junction Complex (EJC)"/>
</dbReference>
<dbReference type="BioGRID-ORCS" id="110954">
    <property type="hits" value="23 hits in 78 CRISPR screens"/>
</dbReference>
<dbReference type="CD-CODE" id="CE726F99">
    <property type="entry name" value="Postsynaptic density"/>
</dbReference>
<dbReference type="ChiTaRS" id="Rpl10">
    <property type="organism name" value="mouse"/>
</dbReference>
<dbReference type="PRO" id="PR:Q6ZWV3"/>
<dbReference type="Proteomes" id="UP000000589">
    <property type="component" value="Chromosome 9"/>
</dbReference>
<dbReference type="Proteomes" id="UP000000589">
    <property type="component" value="Chromosome X"/>
</dbReference>
<dbReference type="RNAct" id="Q6ZWV3">
    <property type="molecule type" value="protein"/>
</dbReference>
<dbReference type="Bgee" id="ENSMUSG00000008682">
    <property type="expression patterns" value="Expressed in epiblast (generic) and 82 other cell types or tissues"/>
</dbReference>
<dbReference type="ExpressionAtlas" id="Q6ZWV3">
    <property type="expression patterns" value="baseline and differential"/>
</dbReference>
<dbReference type="GO" id="GO:0005737">
    <property type="term" value="C:cytoplasm"/>
    <property type="evidence" value="ECO:0000314"/>
    <property type="project" value="MGI"/>
</dbReference>
<dbReference type="GO" id="GO:0005829">
    <property type="term" value="C:cytosol"/>
    <property type="evidence" value="ECO:0000304"/>
    <property type="project" value="Reactome"/>
</dbReference>
<dbReference type="GO" id="GO:0022625">
    <property type="term" value="C:cytosolic large ribosomal subunit"/>
    <property type="evidence" value="ECO:0000314"/>
    <property type="project" value="UniProtKB"/>
</dbReference>
<dbReference type="GO" id="GO:0098794">
    <property type="term" value="C:postsynapse"/>
    <property type="evidence" value="ECO:0000303"/>
    <property type="project" value="SynGO"/>
</dbReference>
<dbReference type="GO" id="GO:0098793">
    <property type="term" value="C:presynapse"/>
    <property type="evidence" value="ECO:0000303"/>
    <property type="project" value="SynGO"/>
</dbReference>
<dbReference type="GO" id="GO:0005840">
    <property type="term" value="C:ribosome"/>
    <property type="evidence" value="ECO:0000303"/>
    <property type="project" value="SynGO"/>
</dbReference>
<dbReference type="GO" id="GO:0045202">
    <property type="term" value="C:synapse"/>
    <property type="evidence" value="ECO:0000314"/>
    <property type="project" value="SynGO"/>
</dbReference>
<dbReference type="GO" id="GO:0003735">
    <property type="term" value="F:structural constituent of ribosome"/>
    <property type="evidence" value="ECO:0000314"/>
    <property type="project" value="UniProtKB"/>
</dbReference>
<dbReference type="GO" id="GO:0045182">
    <property type="term" value="F:translation regulator activity"/>
    <property type="evidence" value="ECO:0000250"/>
    <property type="project" value="UniProtKB"/>
</dbReference>
<dbReference type="GO" id="GO:1990403">
    <property type="term" value="P:embryonic brain development"/>
    <property type="evidence" value="ECO:0000250"/>
    <property type="project" value="UniProtKB"/>
</dbReference>
<dbReference type="GO" id="GO:0006417">
    <property type="term" value="P:regulation of translation"/>
    <property type="evidence" value="ECO:0000250"/>
    <property type="project" value="UniProtKB"/>
</dbReference>
<dbReference type="GO" id="GO:0006412">
    <property type="term" value="P:translation"/>
    <property type="evidence" value="ECO:0000266"/>
    <property type="project" value="MGI"/>
</dbReference>
<dbReference type="GO" id="GO:0140242">
    <property type="term" value="P:translation at postsynapse"/>
    <property type="evidence" value="ECO:0000303"/>
    <property type="project" value="SynGO"/>
</dbReference>
<dbReference type="GO" id="GO:0140236">
    <property type="term" value="P:translation at presynapse"/>
    <property type="evidence" value="ECO:0000303"/>
    <property type="project" value="SynGO"/>
</dbReference>
<dbReference type="CDD" id="cd01433">
    <property type="entry name" value="Ribosomal_L16_L10e"/>
    <property type="match status" value="1"/>
</dbReference>
<dbReference type="FunFam" id="3.30.60.300:FF:000001">
    <property type="entry name" value="60S ribosomal protein L10"/>
    <property type="match status" value="1"/>
</dbReference>
<dbReference type="FunFam" id="3.90.1170.10:FF:000002">
    <property type="entry name" value="60S ribosomal protein L10"/>
    <property type="match status" value="1"/>
</dbReference>
<dbReference type="Gene3D" id="3.30.60.300">
    <property type="match status" value="1"/>
</dbReference>
<dbReference type="Gene3D" id="3.90.1170.10">
    <property type="entry name" value="Ribosomal protein L10e/L16"/>
    <property type="match status" value="1"/>
</dbReference>
<dbReference type="InterPro" id="IPR047873">
    <property type="entry name" value="Ribosomal_uL16"/>
</dbReference>
<dbReference type="InterPro" id="IPR018255">
    <property type="entry name" value="Ribosomal_uL16_CS_euk_arc"/>
</dbReference>
<dbReference type="InterPro" id="IPR016180">
    <property type="entry name" value="Ribosomal_uL16_dom"/>
</dbReference>
<dbReference type="InterPro" id="IPR001197">
    <property type="entry name" value="Ribosomal_uL16_euk_arch"/>
</dbReference>
<dbReference type="InterPro" id="IPR036920">
    <property type="entry name" value="Ribosomal_uL16_sf"/>
</dbReference>
<dbReference type="NCBIfam" id="NF003239">
    <property type="entry name" value="PRK04199.1-4"/>
    <property type="match status" value="1"/>
</dbReference>
<dbReference type="NCBIfam" id="TIGR00279">
    <property type="entry name" value="uL16_euk_arch"/>
    <property type="match status" value="1"/>
</dbReference>
<dbReference type="PANTHER" id="PTHR11726">
    <property type="entry name" value="60S RIBOSOMAL PROTEIN L10"/>
    <property type="match status" value="1"/>
</dbReference>
<dbReference type="Pfam" id="PF00252">
    <property type="entry name" value="Ribosomal_L16"/>
    <property type="match status" value="1"/>
</dbReference>
<dbReference type="PIRSF" id="PIRSF005590">
    <property type="entry name" value="Ribosomal_L10"/>
    <property type="match status" value="1"/>
</dbReference>
<dbReference type="SUPFAM" id="SSF54686">
    <property type="entry name" value="Ribosomal protein L16p/L10e"/>
    <property type="match status" value="1"/>
</dbReference>
<dbReference type="PROSITE" id="PS01257">
    <property type="entry name" value="RIBOSOMAL_L10E"/>
    <property type="match status" value="1"/>
</dbReference>
<organism>
    <name type="scientific">Mus musculus</name>
    <name type="common">Mouse</name>
    <dbReference type="NCBI Taxonomy" id="10090"/>
    <lineage>
        <taxon>Eukaryota</taxon>
        <taxon>Metazoa</taxon>
        <taxon>Chordata</taxon>
        <taxon>Craniata</taxon>
        <taxon>Vertebrata</taxon>
        <taxon>Euteleostomi</taxon>
        <taxon>Mammalia</taxon>
        <taxon>Eutheria</taxon>
        <taxon>Euarchontoglires</taxon>
        <taxon>Glires</taxon>
        <taxon>Rodentia</taxon>
        <taxon>Myomorpha</taxon>
        <taxon>Muroidea</taxon>
        <taxon>Muridae</taxon>
        <taxon>Murinae</taxon>
        <taxon>Mus</taxon>
        <taxon>Mus</taxon>
    </lineage>
</organism>